<name>RL13_CLOD6</name>
<protein>
    <recommendedName>
        <fullName evidence="1">Large ribosomal subunit protein uL13</fullName>
    </recommendedName>
    <alternativeName>
        <fullName evidence="2">50S ribosomal protein L13</fullName>
    </alternativeName>
</protein>
<comment type="function">
    <text evidence="1">This protein is one of the early assembly proteins of the 50S ribosomal subunit, although it is not seen to bind rRNA by itself. It is important during the early stages of 50S assembly.</text>
</comment>
<comment type="subunit">
    <text evidence="1">Part of the 50S ribosomal subunit.</text>
</comment>
<comment type="similarity">
    <text evidence="1">Belongs to the universal ribosomal protein uL13 family.</text>
</comment>
<gene>
    <name evidence="1" type="primary">rplM</name>
    <name type="ordered locus">CD630_01040</name>
</gene>
<accession>Q18CJ1</accession>
<reference key="1">
    <citation type="journal article" date="2006" name="Nat. Genet.">
        <title>The multidrug-resistant human pathogen Clostridium difficile has a highly mobile, mosaic genome.</title>
        <authorList>
            <person name="Sebaihia M."/>
            <person name="Wren B.W."/>
            <person name="Mullany P."/>
            <person name="Fairweather N.F."/>
            <person name="Minton N."/>
            <person name="Stabler R."/>
            <person name="Thomson N.R."/>
            <person name="Roberts A.P."/>
            <person name="Cerdeno-Tarraga A.M."/>
            <person name="Wang H."/>
            <person name="Holden M.T.G."/>
            <person name="Wright A."/>
            <person name="Churcher C."/>
            <person name="Quail M.A."/>
            <person name="Baker S."/>
            <person name="Bason N."/>
            <person name="Brooks K."/>
            <person name="Chillingworth T."/>
            <person name="Cronin A."/>
            <person name="Davis P."/>
            <person name="Dowd L."/>
            <person name="Fraser A."/>
            <person name="Feltwell T."/>
            <person name="Hance Z."/>
            <person name="Holroyd S."/>
            <person name="Jagels K."/>
            <person name="Moule S."/>
            <person name="Mungall K."/>
            <person name="Price C."/>
            <person name="Rabbinowitsch E."/>
            <person name="Sharp S."/>
            <person name="Simmonds M."/>
            <person name="Stevens K."/>
            <person name="Unwin L."/>
            <person name="Whithead S."/>
            <person name="Dupuy B."/>
            <person name="Dougan G."/>
            <person name="Barrell B."/>
            <person name="Parkhill J."/>
        </authorList>
    </citation>
    <scope>NUCLEOTIDE SEQUENCE [LARGE SCALE GENOMIC DNA]</scope>
    <source>
        <strain>630</strain>
    </source>
</reference>
<keyword id="KW-1185">Reference proteome</keyword>
<keyword id="KW-0687">Ribonucleoprotein</keyword>
<keyword id="KW-0689">Ribosomal protein</keyword>
<proteinExistence type="inferred from homology"/>
<feature type="chain" id="PRO_0000261712" description="Large ribosomal subunit protein uL13">
    <location>
        <begin position="1"/>
        <end position="143"/>
    </location>
</feature>
<organism>
    <name type="scientific">Clostridioides difficile (strain 630)</name>
    <name type="common">Peptoclostridium difficile</name>
    <dbReference type="NCBI Taxonomy" id="272563"/>
    <lineage>
        <taxon>Bacteria</taxon>
        <taxon>Bacillati</taxon>
        <taxon>Bacillota</taxon>
        <taxon>Clostridia</taxon>
        <taxon>Peptostreptococcales</taxon>
        <taxon>Peptostreptococcaceae</taxon>
        <taxon>Clostridioides</taxon>
    </lineage>
</organism>
<dbReference type="EMBL" id="AM180355">
    <property type="protein sequence ID" value="CAJ66923.1"/>
    <property type="molecule type" value="Genomic_DNA"/>
</dbReference>
<dbReference type="RefSeq" id="WP_003421107.1">
    <property type="nucleotide sequence ID" value="NZ_JAUPES010000043.1"/>
</dbReference>
<dbReference type="RefSeq" id="YP_001086572.1">
    <property type="nucleotide sequence ID" value="NC_009089.1"/>
</dbReference>
<dbReference type="SMR" id="Q18CJ1"/>
<dbReference type="STRING" id="272563.CD630_01040"/>
<dbReference type="EnsemblBacteria" id="CAJ66923">
    <property type="protein sequence ID" value="CAJ66923"/>
    <property type="gene ID" value="CD630_01040"/>
</dbReference>
<dbReference type="GeneID" id="66352606"/>
<dbReference type="KEGG" id="cdf:CD630_01040"/>
<dbReference type="KEGG" id="pdc:CDIF630_00174"/>
<dbReference type="PATRIC" id="fig|272563.120.peg.114"/>
<dbReference type="eggNOG" id="COG0102">
    <property type="taxonomic scope" value="Bacteria"/>
</dbReference>
<dbReference type="OrthoDB" id="9801330at2"/>
<dbReference type="PhylomeDB" id="Q18CJ1"/>
<dbReference type="BioCyc" id="PDIF272563:G12WB-162-MONOMER"/>
<dbReference type="Proteomes" id="UP000001978">
    <property type="component" value="Chromosome"/>
</dbReference>
<dbReference type="GO" id="GO:0022625">
    <property type="term" value="C:cytosolic large ribosomal subunit"/>
    <property type="evidence" value="ECO:0007669"/>
    <property type="project" value="TreeGrafter"/>
</dbReference>
<dbReference type="GO" id="GO:0003729">
    <property type="term" value="F:mRNA binding"/>
    <property type="evidence" value="ECO:0007669"/>
    <property type="project" value="TreeGrafter"/>
</dbReference>
<dbReference type="GO" id="GO:0003735">
    <property type="term" value="F:structural constituent of ribosome"/>
    <property type="evidence" value="ECO:0007669"/>
    <property type="project" value="InterPro"/>
</dbReference>
<dbReference type="GO" id="GO:0017148">
    <property type="term" value="P:negative regulation of translation"/>
    <property type="evidence" value="ECO:0007669"/>
    <property type="project" value="TreeGrafter"/>
</dbReference>
<dbReference type="GO" id="GO:0006412">
    <property type="term" value="P:translation"/>
    <property type="evidence" value="ECO:0007669"/>
    <property type="project" value="UniProtKB-UniRule"/>
</dbReference>
<dbReference type="CDD" id="cd00392">
    <property type="entry name" value="Ribosomal_L13"/>
    <property type="match status" value="1"/>
</dbReference>
<dbReference type="FunFam" id="3.90.1180.10:FF:000001">
    <property type="entry name" value="50S ribosomal protein L13"/>
    <property type="match status" value="1"/>
</dbReference>
<dbReference type="Gene3D" id="3.90.1180.10">
    <property type="entry name" value="Ribosomal protein L13"/>
    <property type="match status" value="1"/>
</dbReference>
<dbReference type="HAMAP" id="MF_01366">
    <property type="entry name" value="Ribosomal_uL13"/>
    <property type="match status" value="1"/>
</dbReference>
<dbReference type="InterPro" id="IPR005822">
    <property type="entry name" value="Ribosomal_uL13"/>
</dbReference>
<dbReference type="InterPro" id="IPR005823">
    <property type="entry name" value="Ribosomal_uL13_bac-type"/>
</dbReference>
<dbReference type="InterPro" id="IPR036899">
    <property type="entry name" value="Ribosomal_uL13_sf"/>
</dbReference>
<dbReference type="NCBIfam" id="TIGR01066">
    <property type="entry name" value="rplM_bact"/>
    <property type="match status" value="1"/>
</dbReference>
<dbReference type="PANTHER" id="PTHR11545:SF2">
    <property type="entry name" value="LARGE RIBOSOMAL SUBUNIT PROTEIN UL13M"/>
    <property type="match status" value="1"/>
</dbReference>
<dbReference type="PANTHER" id="PTHR11545">
    <property type="entry name" value="RIBOSOMAL PROTEIN L13"/>
    <property type="match status" value="1"/>
</dbReference>
<dbReference type="Pfam" id="PF00572">
    <property type="entry name" value="Ribosomal_L13"/>
    <property type="match status" value="1"/>
</dbReference>
<dbReference type="PIRSF" id="PIRSF002181">
    <property type="entry name" value="Ribosomal_L13"/>
    <property type="match status" value="1"/>
</dbReference>
<dbReference type="SUPFAM" id="SSF52161">
    <property type="entry name" value="Ribosomal protein L13"/>
    <property type="match status" value="1"/>
</dbReference>
<evidence type="ECO:0000255" key="1">
    <source>
        <dbReference type="HAMAP-Rule" id="MF_01366"/>
    </source>
</evidence>
<evidence type="ECO:0000305" key="2"/>
<sequence>MKSYIAKPADVQRKWYLVDAEGKTLGRLATEIATVLRGKHKPTFTPHVDGGDFVVVVNAEKIVLSGKKLDQKYYRYHTGYVGGLKEISYRDMMDKKPEEVISHAVSGMLPKNKLRSRMMTRLRVFAGAEHTHAAQNPEVLNFK</sequence>